<reference key="1">
    <citation type="journal article" date="2012" name="Nature">
        <title>The tomato genome sequence provides insights into fleshy fruit evolution.</title>
        <authorList>
            <consortium name="Tomato Genome Consortium"/>
        </authorList>
    </citation>
    <scope>NUCLEOTIDE SEQUENCE [LARGE SCALE GENOMIC DNA]</scope>
    <source>
        <strain>cv. Heinz 1706</strain>
    </source>
</reference>
<reference key="2">
    <citation type="journal article" date="2015" name="BMC Genomics">
        <title>Genome-wide identification and characterization of the bHLH gene family in tomato.</title>
        <authorList>
            <person name="Sun H."/>
            <person name="Fan H.J."/>
            <person name="Ling H.Q."/>
        </authorList>
    </citation>
    <scope>GENE FAMILY</scope>
    <scope>NOMENCLATURE</scope>
</reference>
<reference key="3">
    <citation type="journal article" date="2019" name="Plant Cell">
        <title>MYC2 regulates the termination of jasmonate signaling via an autoregulatory negative feedback loop.</title>
        <authorList>
            <person name="Liu Y."/>
            <person name="Du M."/>
            <person name="Deng L."/>
            <person name="Shen J."/>
            <person name="Fang M."/>
            <person name="Chen Q."/>
            <person name="Lu Y."/>
            <person name="Wang Q."/>
            <person name="Li C."/>
            <person name="Zhai Q."/>
        </authorList>
    </citation>
    <scope>FUNCTION</scope>
    <scope>INTERACTION WITH MYC2 AND JAZ7</scope>
    <scope>INDUCTION</scope>
</reference>
<proteinExistence type="evidence at protein level"/>
<name>MTB1_SOLLC</name>
<dbReference type="EMBL" id="CM001064">
    <property type="status" value="NOT_ANNOTATED_CDS"/>
    <property type="molecule type" value="Genomic_DNA"/>
</dbReference>
<dbReference type="SMR" id="A0A3Q7ELQ2"/>
<dbReference type="FunCoup" id="A0A3Q7ELQ2">
    <property type="interactions" value="1552"/>
</dbReference>
<dbReference type="STRING" id="4081.A0A3Q7ELQ2"/>
<dbReference type="PaxDb" id="4081-Solyc01g096050.2.1"/>
<dbReference type="EnsemblPlants" id="Solyc01g096050.3.1">
    <property type="protein sequence ID" value="Solyc01g096050.3.1"/>
    <property type="gene ID" value="Solyc01g096050.3"/>
</dbReference>
<dbReference type="Gramene" id="Solyc01g096050.3.1">
    <property type="protein sequence ID" value="Solyc01g096050.3.1"/>
    <property type="gene ID" value="Solyc01g096050.3"/>
</dbReference>
<dbReference type="InParanoid" id="A0A3Q7ELQ2"/>
<dbReference type="OMA" id="RFMFSNP"/>
<dbReference type="Proteomes" id="UP000004994">
    <property type="component" value="Chromosome 1"/>
</dbReference>
<dbReference type="GO" id="GO:0005634">
    <property type="term" value="C:nucleus"/>
    <property type="evidence" value="ECO:0000318"/>
    <property type="project" value="GO_Central"/>
</dbReference>
<dbReference type="GO" id="GO:0003700">
    <property type="term" value="F:DNA-binding transcription factor activity"/>
    <property type="evidence" value="ECO:0000318"/>
    <property type="project" value="GO_Central"/>
</dbReference>
<dbReference type="GO" id="GO:0046983">
    <property type="term" value="F:protein dimerization activity"/>
    <property type="evidence" value="ECO:0007669"/>
    <property type="project" value="InterPro"/>
</dbReference>
<dbReference type="GO" id="GO:0000976">
    <property type="term" value="F:transcription cis-regulatory region binding"/>
    <property type="evidence" value="ECO:0000318"/>
    <property type="project" value="GO_Central"/>
</dbReference>
<dbReference type="GO" id="GO:0006952">
    <property type="term" value="P:defense response"/>
    <property type="evidence" value="ECO:0007669"/>
    <property type="project" value="UniProtKB-KW"/>
</dbReference>
<dbReference type="GO" id="GO:0031347">
    <property type="term" value="P:regulation of defense response"/>
    <property type="evidence" value="ECO:0000315"/>
    <property type="project" value="UniProtKB"/>
</dbReference>
<dbReference type="GO" id="GO:0006355">
    <property type="term" value="P:regulation of DNA-templated transcription"/>
    <property type="evidence" value="ECO:0000314"/>
    <property type="project" value="UniProtKB"/>
</dbReference>
<dbReference type="GO" id="GO:2000022">
    <property type="term" value="P:regulation of jasmonic acid mediated signaling pathway"/>
    <property type="evidence" value="ECO:0000315"/>
    <property type="project" value="UniProtKB"/>
</dbReference>
<dbReference type="CDD" id="cd11449">
    <property type="entry name" value="bHLH_AtAIB_like"/>
    <property type="match status" value="1"/>
</dbReference>
<dbReference type="FunFam" id="4.10.280.10:FF:000078">
    <property type="entry name" value="Transcription factor bHLH13"/>
    <property type="match status" value="1"/>
</dbReference>
<dbReference type="Gene3D" id="4.10.280.10">
    <property type="entry name" value="Helix-loop-helix DNA-binding domain"/>
    <property type="match status" value="1"/>
</dbReference>
<dbReference type="InterPro" id="IPR045084">
    <property type="entry name" value="AIB/MYC-like"/>
</dbReference>
<dbReference type="InterPro" id="IPR011598">
    <property type="entry name" value="bHLH_dom"/>
</dbReference>
<dbReference type="InterPro" id="IPR036638">
    <property type="entry name" value="HLH_DNA-bd_sf"/>
</dbReference>
<dbReference type="InterPro" id="IPR025610">
    <property type="entry name" value="MYC/MYB_N"/>
</dbReference>
<dbReference type="PANTHER" id="PTHR11514">
    <property type="entry name" value="MYC"/>
    <property type="match status" value="1"/>
</dbReference>
<dbReference type="PANTHER" id="PTHR11514:SF107">
    <property type="entry name" value="TRANSCRIPTION FACTOR MTB1"/>
    <property type="match status" value="1"/>
</dbReference>
<dbReference type="Pfam" id="PF14215">
    <property type="entry name" value="bHLH-MYC_N"/>
    <property type="match status" value="1"/>
</dbReference>
<dbReference type="Pfam" id="PF00010">
    <property type="entry name" value="HLH"/>
    <property type="match status" value="1"/>
</dbReference>
<dbReference type="SMART" id="SM00353">
    <property type="entry name" value="HLH"/>
    <property type="match status" value="1"/>
</dbReference>
<dbReference type="SUPFAM" id="SSF47459">
    <property type="entry name" value="HLH, helix-loop-helix DNA-binding domain"/>
    <property type="match status" value="1"/>
</dbReference>
<dbReference type="PROSITE" id="PS50888">
    <property type="entry name" value="BHLH"/>
    <property type="match status" value="1"/>
</dbReference>
<gene>
    <name evidence="5" type="primary">MTB1</name>
    <name evidence="4" type="synonym">BHLH113</name>
    <name evidence="6" type="ordered locus">Solyc01g096050</name>
</gene>
<feature type="chain" id="PRO_0000447548" description="Transcription factor MTB1">
    <location>
        <begin position="1"/>
        <end position="613"/>
    </location>
</feature>
<feature type="domain" description="bHLH" evidence="1">
    <location>
        <begin position="430"/>
        <end position="479"/>
    </location>
</feature>
<feature type="region of interest" description="JAZ-interaction domain" evidence="7">
    <location>
        <begin position="48"/>
        <end position="130"/>
    </location>
</feature>
<feature type="region of interest" description="Disordered" evidence="2">
    <location>
        <begin position="256"/>
        <end position="285"/>
    </location>
</feature>
<feature type="region of interest" description="Disordered" evidence="2">
    <location>
        <begin position="391"/>
        <end position="441"/>
    </location>
</feature>
<feature type="region of interest" description="Basic motif; degenerate" evidence="1">
    <location>
        <begin position="430"/>
        <end position="443"/>
    </location>
</feature>
<feature type="region of interest" description="Helix-loop-helix motif" evidence="1">
    <location>
        <begin position="444"/>
        <end position="479"/>
    </location>
</feature>
<feature type="region of interest" description="Disordered" evidence="2">
    <location>
        <begin position="490"/>
        <end position="513"/>
    </location>
</feature>
<feature type="compositionally biased region" description="Polar residues" evidence="2">
    <location>
        <begin position="260"/>
        <end position="270"/>
    </location>
</feature>
<feature type="compositionally biased region" description="Basic and acidic residues" evidence="2">
    <location>
        <begin position="394"/>
        <end position="417"/>
    </location>
</feature>
<feature type="compositionally biased region" description="Basic and acidic residues" evidence="2">
    <location>
        <begin position="427"/>
        <end position="441"/>
    </location>
</feature>
<feature type="compositionally biased region" description="Polar residues" evidence="2">
    <location>
        <begin position="495"/>
        <end position="512"/>
    </location>
</feature>
<protein>
    <recommendedName>
        <fullName evidence="5">Transcription factor MTB1</fullName>
    </recommendedName>
    <alternativeName>
        <fullName evidence="4">Basic helix-loop-helix protein 113</fullName>
    </alternativeName>
    <alternativeName>
        <fullName evidence="5">Protein MYC2-TARGETED BHLH 1</fullName>
    </alternativeName>
    <alternativeName>
        <fullName evidence="4">Transcription factor bHLH113</fullName>
    </alternativeName>
    <alternativeName>
        <fullName evidence="6">bHLH transcription factor bHLH113</fullName>
    </alternativeName>
</protein>
<keyword id="KW-1184">Jasmonic acid signaling pathway</keyword>
<keyword id="KW-0539">Nucleus</keyword>
<keyword id="KW-0611">Plant defense</keyword>
<keyword id="KW-1185">Reference proteome</keyword>
<keyword id="KW-0804">Transcription</keyword>
<keyword id="KW-0805">Transcription regulation</keyword>
<sequence length="613" mass="68254">MVTGNMLWSGEDKAMVASVLGKEAFEYLMSGSVSAECSLMAIGNDQNLQNKLSDLVERPNAANFSWNYAIFWQISRSKSGELVLGWGDGCCREPKEAEEREVKKILNLRLDDEGQQRMRKRVLQKLHMLFGGTDEDNYAFGLDRVTDTEMFFLASMYFSFPRGEGGPGKCFGSGKYLWLSDALTSNLDYCARSFLAKSAGMQTIALIPTDVGVVELGSVRSIPESLELLQNIKSCFSSFLSLVRDKQAAGIAAVPEKNEGNNPRLSNSGAVTERTDGNPKIFGHDLNSGTHFREKLAVRKAEERPWDMYQNGNRMPFVNARNGLNPASWAQFSNVKLGKPVELYAPPTPGHNLMNGGREEFRLNNFQHQKPAARMQIDFTGATSRTIVSPAHNVESEHSDVEASCKEDRAGPVDEKRPRKRGRKPANGREEPLNHVEAERQRREKLNQRFYALRAVVPNISKMDKASLLGDAIAYITELQKKLRDMESERELRLGSTSRDAITSEDSPSSEIQIRGPDINIEAANDEVIVRVSCSLETHPLSRIIQIFKEAQINVVESKLSAGNGTVYHTFVIKSSGSEQLTKEKLLAAFSSESNSLRQLSPKLHKVILPSLF</sequence>
<organism>
    <name type="scientific">Solanum lycopersicum</name>
    <name type="common">Tomato</name>
    <name type="synonym">Lycopersicon esculentum</name>
    <dbReference type="NCBI Taxonomy" id="4081"/>
    <lineage>
        <taxon>Eukaryota</taxon>
        <taxon>Viridiplantae</taxon>
        <taxon>Streptophyta</taxon>
        <taxon>Embryophyta</taxon>
        <taxon>Tracheophyta</taxon>
        <taxon>Spermatophyta</taxon>
        <taxon>Magnoliopsida</taxon>
        <taxon>eudicotyledons</taxon>
        <taxon>Gunneridae</taxon>
        <taxon>Pentapetalae</taxon>
        <taxon>asterids</taxon>
        <taxon>lamiids</taxon>
        <taxon>Solanales</taxon>
        <taxon>Solanaceae</taxon>
        <taxon>Solanoideae</taxon>
        <taxon>Solaneae</taxon>
        <taxon>Solanum</taxon>
        <taxon>Solanum subgen. Lycopersicon</taxon>
    </lineage>
</organism>
<evidence type="ECO:0000255" key="1">
    <source>
        <dbReference type="PROSITE-ProRule" id="PRU00981"/>
    </source>
</evidence>
<evidence type="ECO:0000256" key="2">
    <source>
        <dbReference type="SAM" id="MobiDB-lite"/>
    </source>
</evidence>
<evidence type="ECO:0000269" key="3">
    <source>
    </source>
</evidence>
<evidence type="ECO:0000303" key="4">
    <source>
    </source>
</evidence>
<evidence type="ECO:0000303" key="5">
    <source>
    </source>
</evidence>
<evidence type="ECO:0000305" key="6"/>
<evidence type="ECO:0000305" key="7">
    <source>
    </source>
</evidence>
<accession>A0A3Q7ELQ2</accession>
<comment type="function">
    <text evidence="3">Transcription factor that negatively regulates jasmonate (JA) signaling (PubMed:30610166). Negatively regulates JA-dependent response to wounding, JA-induced expression of defense genes, JA-dependent responses against herbivorous insects, and JA-dependent resistance against Botrytis cinerea infection (PubMed:30610166). Plays a positive role in resistance against the bacterial pathogen Pseudomonas syringae pv tomato DC3000 (PubMed:30610166).</text>
</comment>
<comment type="subunit">
    <text evidence="3">Interacts with MYC2 (via N-terminus) (PubMed:30610166). MTB1 competes with MED25 for binding to MYC2 (PubMed:30610166). Interacts (via N-terminus) with JAZ7 (PubMed:30610166).</text>
</comment>
<comment type="subcellular location">
    <subcellularLocation>
        <location evidence="1">Nucleus</location>
    </subcellularLocation>
</comment>
<comment type="induction">
    <text evidence="3">Induced by wounding, feeding with herbivorous insects, infection with the fungal pathogen Botrytis cinerea and infection with the bacterial pathogen Pseudomonas syringae pv tomato DC3000.</text>
</comment>
<comment type="caution">
    <text evidence="1">Contains a degenerate basic motif not likely to bind DNA.</text>
</comment>